<reference key="1">
    <citation type="journal article" date="2005" name="Science">
        <title>The transcriptional landscape of the mammalian genome.</title>
        <authorList>
            <person name="Carninci P."/>
            <person name="Kasukawa T."/>
            <person name="Katayama S."/>
            <person name="Gough J."/>
            <person name="Frith M.C."/>
            <person name="Maeda N."/>
            <person name="Oyama R."/>
            <person name="Ravasi T."/>
            <person name="Lenhard B."/>
            <person name="Wells C."/>
            <person name="Kodzius R."/>
            <person name="Shimokawa K."/>
            <person name="Bajic V.B."/>
            <person name="Brenner S.E."/>
            <person name="Batalov S."/>
            <person name="Forrest A.R."/>
            <person name="Zavolan M."/>
            <person name="Davis M.J."/>
            <person name="Wilming L.G."/>
            <person name="Aidinis V."/>
            <person name="Allen J.E."/>
            <person name="Ambesi-Impiombato A."/>
            <person name="Apweiler R."/>
            <person name="Aturaliya R.N."/>
            <person name="Bailey T.L."/>
            <person name="Bansal M."/>
            <person name="Baxter L."/>
            <person name="Beisel K.W."/>
            <person name="Bersano T."/>
            <person name="Bono H."/>
            <person name="Chalk A.M."/>
            <person name="Chiu K.P."/>
            <person name="Choudhary V."/>
            <person name="Christoffels A."/>
            <person name="Clutterbuck D.R."/>
            <person name="Crowe M.L."/>
            <person name="Dalla E."/>
            <person name="Dalrymple B.P."/>
            <person name="de Bono B."/>
            <person name="Della Gatta G."/>
            <person name="di Bernardo D."/>
            <person name="Down T."/>
            <person name="Engstrom P."/>
            <person name="Fagiolini M."/>
            <person name="Faulkner G."/>
            <person name="Fletcher C.F."/>
            <person name="Fukushima T."/>
            <person name="Furuno M."/>
            <person name="Futaki S."/>
            <person name="Gariboldi M."/>
            <person name="Georgii-Hemming P."/>
            <person name="Gingeras T.R."/>
            <person name="Gojobori T."/>
            <person name="Green R.E."/>
            <person name="Gustincich S."/>
            <person name="Harbers M."/>
            <person name="Hayashi Y."/>
            <person name="Hensch T.K."/>
            <person name="Hirokawa N."/>
            <person name="Hill D."/>
            <person name="Huminiecki L."/>
            <person name="Iacono M."/>
            <person name="Ikeo K."/>
            <person name="Iwama A."/>
            <person name="Ishikawa T."/>
            <person name="Jakt M."/>
            <person name="Kanapin A."/>
            <person name="Katoh M."/>
            <person name="Kawasawa Y."/>
            <person name="Kelso J."/>
            <person name="Kitamura H."/>
            <person name="Kitano H."/>
            <person name="Kollias G."/>
            <person name="Krishnan S.P."/>
            <person name="Kruger A."/>
            <person name="Kummerfeld S.K."/>
            <person name="Kurochkin I.V."/>
            <person name="Lareau L.F."/>
            <person name="Lazarevic D."/>
            <person name="Lipovich L."/>
            <person name="Liu J."/>
            <person name="Liuni S."/>
            <person name="McWilliam S."/>
            <person name="Madan Babu M."/>
            <person name="Madera M."/>
            <person name="Marchionni L."/>
            <person name="Matsuda H."/>
            <person name="Matsuzawa S."/>
            <person name="Miki H."/>
            <person name="Mignone F."/>
            <person name="Miyake S."/>
            <person name="Morris K."/>
            <person name="Mottagui-Tabar S."/>
            <person name="Mulder N."/>
            <person name="Nakano N."/>
            <person name="Nakauchi H."/>
            <person name="Ng P."/>
            <person name="Nilsson R."/>
            <person name="Nishiguchi S."/>
            <person name="Nishikawa S."/>
            <person name="Nori F."/>
            <person name="Ohara O."/>
            <person name="Okazaki Y."/>
            <person name="Orlando V."/>
            <person name="Pang K.C."/>
            <person name="Pavan W.J."/>
            <person name="Pavesi G."/>
            <person name="Pesole G."/>
            <person name="Petrovsky N."/>
            <person name="Piazza S."/>
            <person name="Reed J."/>
            <person name="Reid J.F."/>
            <person name="Ring B.Z."/>
            <person name="Ringwald M."/>
            <person name="Rost B."/>
            <person name="Ruan Y."/>
            <person name="Salzberg S.L."/>
            <person name="Sandelin A."/>
            <person name="Schneider C."/>
            <person name="Schoenbach C."/>
            <person name="Sekiguchi K."/>
            <person name="Semple C.A."/>
            <person name="Seno S."/>
            <person name="Sessa L."/>
            <person name="Sheng Y."/>
            <person name="Shibata Y."/>
            <person name="Shimada H."/>
            <person name="Shimada K."/>
            <person name="Silva D."/>
            <person name="Sinclair B."/>
            <person name="Sperling S."/>
            <person name="Stupka E."/>
            <person name="Sugiura K."/>
            <person name="Sultana R."/>
            <person name="Takenaka Y."/>
            <person name="Taki K."/>
            <person name="Tammoja K."/>
            <person name="Tan S.L."/>
            <person name="Tang S."/>
            <person name="Taylor M.S."/>
            <person name="Tegner J."/>
            <person name="Teichmann S.A."/>
            <person name="Ueda H.R."/>
            <person name="van Nimwegen E."/>
            <person name="Verardo R."/>
            <person name="Wei C.L."/>
            <person name="Yagi K."/>
            <person name="Yamanishi H."/>
            <person name="Zabarovsky E."/>
            <person name="Zhu S."/>
            <person name="Zimmer A."/>
            <person name="Hide W."/>
            <person name="Bult C."/>
            <person name="Grimmond S.M."/>
            <person name="Teasdale R.D."/>
            <person name="Liu E.T."/>
            <person name="Brusic V."/>
            <person name="Quackenbush J."/>
            <person name="Wahlestedt C."/>
            <person name="Mattick J.S."/>
            <person name="Hume D.A."/>
            <person name="Kai C."/>
            <person name="Sasaki D."/>
            <person name="Tomaru Y."/>
            <person name="Fukuda S."/>
            <person name="Kanamori-Katayama M."/>
            <person name="Suzuki M."/>
            <person name="Aoki J."/>
            <person name="Arakawa T."/>
            <person name="Iida J."/>
            <person name="Imamura K."/>
            <person name="Itoh M."/>
            <person name="Kato T."/>
            <person name="Kawaji H."/>
            <person name="Kawagashira N."/>
            <person name="Kawashima T."/>
            <person name="Kojima M."/>
            <person name="Kondo S."/>
            <person name="Konno H."/>
            <person name="Nakano K."/>
            <person name="Ninomiya N."/>
            <person name="Nishio T."/>
            <person name="Okada M."/>
            <person name="Plessy C."/>
            <person name="Shibata K."/>
            <person name="Shiraki T."/>
            <person name="Suzuki S."/>
            <person name="Tagami M."/>
            <person name="Waki K."/>
            <person name="Watahiki A."/>
            <person name="Okamura-Oho Y."/>
            <person name="Suzuki H."/>
            <person name="Kawai J."/>
            <person name="Hayashizaki Y."/>
        </authorList>
    </citation>
    <scope>NUCLEOTIDE SEQUENCE [LARGE SCALE MRNA] (ISOFORMS 1 AND 2)</scope>
    <source>
        <strain>C57BL/6J</strain>
        <strain>NOD</strain>
        <tissue>Cecum</tissue>
        <tissue>Diencephalon</tissue>
        <tissue>Thymus</tissue>
    </source>
</reference>
<reference key="2">
    <citation type="journal article" date="2004" name="Genome Res.">
        <title>The status, quality, and expansion of the NIH full-length cDNA project: the Mammalian Gene Collection (MGC).</title>
        <authorList>
            <consortium name="The MGC Project Team"/>
        </authorList>
    </citation>
    <scope>NUCLEOTIDE SEQUENCE [LARGE SCALE MRNA] (ISOFORM 1)</scope>
    <source>
        <strain>C57BL/6J</strain>
        <tissue>Brain</tissue>
        <tissue>Liver</tissue>
    </source>
</reference>
<reference key="3">
    <citation type="journal article" date="2010" name="Cell">
        <title>A tissue-specific atlas of mouse protein phosphorylation and expression.</title>
        <authorList>
            <person name="Huttlin E.L."/>
            <person name="Jedrychowski M.P."/>
            <person name="Elias J.E."/>
            <person name="Goswami T."/>
            <person name="Rad R."/>
            <person name="Beausoleil S.A."/>
            <person name="Villen J."/>
            <person name="Haas W."/>
            <person name="Sowa M.E."/>
            <person name="Gygi S.P."/>
        </authorList>
    </citation>
    <scope>IDENTIFICATION BY MASS SPECTROMETRY [LARGE SCALE ANALYSIS]</scope>
    <source>
        <tissue>Brain</tissue>
        <tissue>Brown adipose tissue</tissue>
        <tissue>Heart</tissue>
        <tissue>Kidney</tissue>
        <tissue>Liver</tissue>
    </source>
</reference>
<reference key="4">
    <citation type="journal article" date="2013" name="Mol. Cell">
        <title>SIRT5-mediated lysine desuccinylation impacts diverse metabolic pathways.</title>
        <authorList>
            <person name="Park J."/>
            <person name="Chen Y."/>
            <person name="Tishkoff D.X."/>
            <person name="Peng C."/>
            <person name="Tan M."/>
            <person name="Dai L."/>
            <person name="Xie Z."/>
            <person name="Zhang Y."/>
            <person name="Zwaans B.M."/>
            <person name="Skinner M.E."/>
            <person name="Lombard D.B."/>
            <person name="Zhao Y."/>
        </authorList>
    </citation>
    <scope>SUCCINYLATION [LARGE SCALE ANALYSIS] AT LYS-205 AND LYS-224</scope>
    <scope>IDENTIFICATION BY MASS SPECTROMETRY [LARGE SCALE ANALYSIS]</scope>
    <source>
        <tissue>Liver</tissue>
    </source>
</reference>
<reference key="5">
    <citation type="journal article" date="2013" name="Proc. Natl. Acad. Sci. U.S.A.">
        <title>Label-free quantitative proteomics of the lysine acetylome in mitochondria identifies substrates of SIRT3 in metabolic pathways.</title>
        <authorList>
            <person name="Rardin M.J."/>
            <person name="Newman J.C."/>
            <person name="Held J.M."/>
            <person name="Cusack M.P."/>
            <person name="Sorensen D.J."/>
            <person name="Li B."/>
            <person name="Schilling B."/>
            <person name="Mooney S.D."/>
            <person name="Kahn C.R."/>
            <person name="Verdin E."/>
            <person name="Gibson B.W."/>
        </authorList>
    </citation>
    <scope>ACETYLATION [LARGE SCALE ANALYSIS] AT LYS-224</scope>
    <scope>IDENTIFICATION BY MASS SPECTROMETRY [LARGE SCALE ANALYSIS]</scope>
    <source>
        <tissue>Liver</tissue>
    </source>
</reference>
<organism>
    <name type="scientific">Mus musculus</name>
    <name type="common">Mouse</name>
    <dbReference type="NCBI Taxonomy" id="10090"/>
    <lineage>
        <taxon>Eukaryota</taxon>
        <taxon>Metazoa</taxon>
        <taxon>Chordata</taxon>
        <taxon>Craniata</taxon>
        <taxon>Vertebrata</taxon>
        <taxon>Euteleostomi</taxon>
        <taxon>Mammalia</taxon>
        <taxon>Eutheria</taxon>
        <taxon>Euarchontoglires</taxon>
        <taxon>Glires</taxon>
        <taxon>Rodentia</taxon>
        <taxon>Myomorpha</taxon>
        <taxon>Muroidea</taxon>
        <taxon>Muridae</taxon>
        <taxon>Murinae</taxon>
        <taxon>Mus</taxon>
        <taxon>Mus</taxon>
    </lineage>
</organism>
<comment type="function">
    <text evidence="1">Converts cob(I)alamin to adenosylcobalamin (adenosylcob(III)alamin), a coenzyme for methylmalonyl-CoA mutase, therefore participates in the final step of the vitamin B12 conversion. Generates adenosylcobalamin (AdoCbl) and directly delivers the cofactor to MUT in a transfer that is stimulated by ATP-binding to MMAB and gated by MMAA.</text>
</comment>
<comment type="catalytic activity">
    <reaction evidence="1">
        <text>cob(I)alamin-[corrinoid adenosyltransferase] + ATP = apo-[corrinoid adenosyltransferase] + adenosylcob(III)alamin + triphosphate</text>
        <dbReference type="Rhea" id="RHEA:56796"/>
        <dbReference type="Rhea" id="RHEA-COMP:14743"/>
        <dbReference type="Rhea" id="RHEA-COMP:14744"/>
        <dbReference type="ChEBI" id="CHEBI:18036"/>
        <dbReference type="ChEBI" id="CHEBI:18408"/>
        <dbReference type="ChEBI" id="CHEBI:30616"/>
        <dbReference type="ChEBI" id="CHEBI:60488"/>
        <dbReference type="ChEBI" id="CHEBI:83228"/>
    </reaction>
    <physiologicalReaction direction="left-to-right" evidence="1">
        <dbReference type="Rhea" id="RHEA:56797"/>
    </physiologicalReaction>
</comment>
<comment type="subunit">
    <text evidence="1">Homotrimer.</text>
</comment>
<comment type="subcellular location">
    <subcellularLocation>
        <location evidence="1">Mitochondrion</location>
    </subcellularLocation>
</comment>
<comment type="alternative products">
    <event type="alternative splicing"/>
    <isoform>
        <id>Q9D273-1</id>
        <name>1</name>
        <sequence type="displayed"/>
    </isoform>
    <isoform>
        <id>Q9D273-2</id>
        <name>2</name>
        <sequence type="described" ref="VSP_008847"/>
    </isoform>
</comment>
<comment type="miscellaneous">
    <molecule>Isoform 2</molecule>
    <text evidence="5">Due to intron retention.</text>
</comment>
<comment type="similarity">
    <text evidence="5">Belongs to the Cob(I)alamin adenosyltransferase family.</text>
</comment>
<evidence type="ECO:0000250" key="1">
    <source>
        <dbReference type="UniProtKB" id="Q96EY8"/>
    </source>
</evidence>
<evidence type="ECO:0000255" key="2"/>
<evidence type="ECO:0000256" key="3">
    <source>
        <dbReference type="SAM" id="MobiDB-lite"/>
    </source>
</evidence>
<evidence type="ECO:0000303" key="4">
    <source>
    </source>
</evidence>
<evidence type="ECO:0000305" key="5"/>
<evidence type="ECO:0000312" key="6">
    <source>
        <dbReference type="MGI" id="MGI:1924947"/>
    </source>
</evidence>
<evidence type="ECO:0007744" key="7">
    <source>
    </source>
</evidence>
<evidence type="ECO:0007744" key="8">
    <source>
    </source>
</evidence>
<accession>Q9D273</accession>
<accession>Q3UFL6</accession>
<accession>Q8CBZ0</accession>
<accession>Q8VBZ4</accession>
<sequence length="237" mass="26273">MAVWLFGGRLGLRGRLSACRLLCPRFQSRGPQGGEDGDRLQPSSTAAKIPKIYTKTGDKGFSSTFTGERRPKDDQVFEAVGTTDELSSAIGFAMELVTEKGHMFAEELQKIQCMLQDVGSALATPRSSAREAHLKHTAFQEGPVLELERWIDKYSSQLPPLKAFILPSGGKSSSALHFCRAVCRRAERRVVPLVQMGETDANVAKFLNRLSDYLFTVARYAAMKEGSQEKIYKKHDV</sequence>
<protein>
    <recommendedName>
        <fullName evidence="5">Corrinoid adenosyltransferase MMAB</fullName>
        <ecNumber evidence="1">2.5.1.-</ecNumber>
    </recommendedName>
    <alternativeName>
        <fullName>ATP:co(I)rrinoid adenosyltransferase MMAB</fullName>
    </alternativeName>
    <alternativeName>
        <fullName>Methylmalonic aciduria type B homolog</fullName>
    </alternativeName>
</protein>
<gene>
    <name evidence="6" type="primary">Mmab</name>
</gene>
<dbReference type="EC" id="2.5.1.-" evidence="1"/>
<dbReference type="EMBL" id="AK020286">
    <property type="protein sequence ID" value="BAB32055.1"/>
    <property type="molecule type" value="mRNA"/>
</dbReference>
<dbReference type="EMBL" id="AK034288">
    <property type="protein sequence ID" value="BAC28659.1"/>
    <property type="molecule type" value="mRNA"/>
</dbReference>
<dbReference type="EMBL" id="AK088785">
    <property type="protein sequence ID" value="BAC40571.1"/>
    <property type="molecule type" value="mRNA"/>
</dbReference>
<dbReference type="EMBL" id="AK148421">
    <property type="protein sequence ID" value="BAE28544.1"/>
    <property type="molecule type" value="mRNA"/>
</dbReference>
<dbReference type="EMBL" id="BC022159">
    <property type="protein sequence ID" value="AAH22159.1"/>
    <property type="molecule type" value="mRNA"/>
</dbReference>
<dbReference type="EMBL" id="BC057558">
    <property type="protein sequence ID" value="AAH57558.1"/>
    <property type="molecule type" value="mRNA"/>
</dbReference>
<dbReference type="CCDS" id="CCDS19565.1">
    <molecule id="Q9D273-1"/>
</dbReference>
<dbReference type="RefSeq" id="NP_001423046.1">
    <molecule id="Q9D273-2"/>
    <property type="nucleotide sequence ID" value="NM_001436117.1"/>
</dbReference>
<dbReference type="RefSeq" id="NP_084232.1">
    <molecule id="Q9D273-1"/>
    <property type="nucleotide sequence ID" value="NM_029956.5"/>
</dbReference>
<dbReference type="SMR" id="Q9D273"/>
<dbReference type="BioGRID" id="218853">
    <property type="interactions" value="4"/>
</dbReference>
<dbReference type="FunCoup" id="Q9D273">
    <property type="interactions" value="785"/>
</dbReference>
<dbReference type="IntAct" id="Q9D273">
    <property type="interactions" value="1"/>
</dbReference>
<dbReference type="STRING" id="10090.ENSMUSP00000031560"/>
<dbReference type="GlyGen" id="Q9D273">
    <property type="glycosylation" value="1 site, 1 O-linked glycan (1 site)"/>
</dbReference>
<dbReference type="iPTMnet" id="Q9D273"/>
<dbReference type="PhosphoSitePlus" id="Q9D273"/>
<dbReference type="PaxDb" id="10090-ENSMUSP00000031560"/>
<dbReference type="PeptideAtlas" id="Q9D273"/>
<dbReference type="ProteomicsDB" id="295958">
    <molecule id="Q9D273-1"/>
</dbReference>
<dbReference type="ProteomicsDB" id="295959">
    <molecule id="Q9D273-2"/>
</dbReference>
<dbReference type="Pumba" id="Q9D273"/>
<dbReference type="Antibodypedia" id="30891">
    <property type="antibodies" value="198 antibodies from 26 providers"/>
</dbReference>
<dbReference type="DNASU" id="77697"/>
<dbReference type="Ensembl" id="ENSMUST00000031560.14">
    <molecule id="Q9D273-1"/>
    <property type="protein sequence ID" value="ENSMUSP00000031560.8"/>
    <property type="gene ID" value="ENSMUSG00000029575.18"/>
</dbReference>
<dbReference type="Ensembl" id="ENSMUST00000123256.3">
    <molecule id="Q9D273-2"/>
    <property type="protein sequence ID" value="ENSMUSP00000142979.2"/>
    <property type="gene ID" value="ENSMUSG00000029575.18"/>
</dbReference>
<dbReference type="GeneID" id="77697"/>
<dbReference type="KEGG" id="mmu:77697"/>
<dbReference type="UCSC" id="uc008yzo.1">
    <molecule id="Q9D273-1"/>
    <property type="organism name" value="mouse"/>
</dbReference>
<dbReference type="UCSC" id="uc008yzp.1">
    <molecule id="Q9D273-2"/>
    <property type="organism name" value="mouse"/>
</dbReference>
<dbReference type="AGR" id="MGI:1924947"/>
<dbReference type="CTD" id="326625"/>
<dbReference type="MGI" id="MGI:1924947">
    <property type="gene designation" value="Mmab"/>
</dbReference>
<dbReference type="VEuPathDB" id="HostDB:ENSMUSG00000029575"/>
<dbReference type="eggNOG" id="ENOG502QS64">
    <property type="taxonomic scope" value="Eukaryota"/>
</dbReference>
<dbReference type="GeneTree" id="ENSGT00390000008432"/>
<dbReference type="HOGENOM" id="CLU_083486_1_1_1"/>
<dbReference type="InParanoid" id="Q9D273"/>
<dbReference type="OMA" id="HQACTVV"/>
<dbReference type="OrthoDB" id="549173at2759"/>
<dbReference type="PhylomeDB" id="Q9D273"/>
<dbReference type="TreeFam" id="TF312942"/>
<dbReference type="Reactome" id="R-MMU-9759218">
    <property type="pathway name" value="Cobalamin (Cbl) metabolism"/>
</dbReference>
<dbReference type="BioGRID-ORCS" id="77697">
    <property type="hits" value="5 hits in 76 CRISPR screens"/>
</dbReference>
<dbReference type="PRO" id="PR:Q9D273"/>
<dbReference type="Proteomes" id="UP000000589">
    <property type="component" value="Chromosome 5"/>
</dbReference>
<dbReference type="RNAct" id="Q9D273">
    <property type="molecule type" value="protein"/>
</dbReference>
<dbReference type="Bgee" id="ENSMUSG00000029575">
    <property type="expression patterns" value="Expressed in lumbar dorsal root ganglion and 243 other cell types or tissues"/>
</dbReference>
<dbReference type="ExpressionAtlas" id="Q9D273">
    <property type="expression patterns" value="baseline and differential"/>
</dbReference>
<dbReference type="GO" id="GO:0005739">
    <property type="term" value="C:mitochondrion"/>
    <property type="evidence" value="ECO:0007005"/>
    <property type="project" value="MGI"/>
</dbReference>
<dbReference type="GO" id="GO:0005524">
    <property type="term" value="F:ATP binding"/>
    <property type="evidence" value="ECO:0007669"/>
    <property type="project" value="UniProtKB-KW"/>
</dbReference>
<dbReference type="GO" id="GO:0031419">
    <property type="term" value="F:cobalamin binding"/>
    <property type="evidence" value="ECO:0000250"/>
    <property type="project" value="UniProtKB"/>
</dbReference>
<dbReference type="GO" id="GO:0008817">
    <property type="term" value="F:corrinoid adenosyltransferase activity"/>
    <property type="evidence" value="ECO:0000266"/>
    <property type="project" value="MGI"/>
</dbReference>
<dbReference type="GO" id="GO:0016765">
    <property type="term" value="F:transferase activity, transferring alkyl or aryl (other than methyl) groups"/>
    <property type="evidence" value="ECO:0000250"/>
    <property type="project" value="UniProtKB"/>
</dbReference>
<dbReference type="GO" id="GO:0009235">
    <property type="term" value="P:cobalamin metabolic process"/>
    <property type="evidence" value="ECO:0000250"/>
    <property type="project" value="UniProtKB"/>
</dbReference>
<dbReference type="FunFam" id="1.20.1200.10:FF:000001">
    <property type="entry name" value="Cob(I)yrinic acid a,c-diamide adenosyltransferase"/>
    <property type="match status" value="1"/>
</dbReference>
<dbReference type="Gene3D" id="1.20.1200.10">
    <property type="entry name" value="Cobalamin adenosyltransferase-like"/>
    <property type="match status" value="1"/>
</dbReference>
<dbReference type="InterPro" id="IPR016030">
    <property type="entry name" value="CblAdoTrfase-like"/>
</dbReference>
<dbReference type="InterPro" id="IPR036451">
    <property type="entry name" value="CblAdoTrfase-like_sf"/>
</dbReference>
<dbReference type="InterPro" id="IPR029499">
    <property type="entry name" value="PduO-typ"/>
</dbReference>
<dbReference type="NCBIfam" id="TIGR00636">
    <property type="entry name" value="PduO_Nterm"/>
    <property type="match status" value="1"/>
</dbReference>
<dbReference type="PANTHER" id="PTHR12213">
    <property type="entry name" value="CORRINOID ADENOSYLTRANSFERASE"/>
    <property type="match status" value="1"/>
</dbReference>
<dbReference type="PANTHER" id="PTHR12213:SF0">
    <property type="entry name" value="CORRINOID ADENOSYLTRANSFERASE MMAB"/>
    <property type="match status" value="1"/>
</dbReference>
<dbReference type="Pfam" id="PF01923">
    <property type="entry name" value="Cob_adeno_trans"/>
    <property type="match status" value="1"/>
</dbReference>
<dbReference type="SUPFAM" id="SSF89028">
    <property type="entry name" value="Cobalamin adenosyltransferase-like"/>
    <property type="match status" value="1"/>
</dbReference>
<keyword id="KW-0007">Acetylation</keyword>
<keyword id="KW-0025">Alternative splicing</keyword>
<keyword id="KW-0067">ATP-binding</keyword>
<keyword id="KW-0496">Mitochondrion</keyword>
<keyword id="KW-0547">Nucleotide-binding</keyword>
<keyword id="KW-0597">Phosphoprotein</keyword>
<keyword id="KW-1185">Reference proteome</keyword>
<keyword id="KW-0808">Transferase</keyword>
<keyword id="KW-0809">Transit peptide</keyword>
<feature type="transit peptide" description="Mitochondrion" evidence="2">
    <location>
        <begin position="1"/>
        <end position="26"/>
    </location>
</feature>
<feature type="chain" id="PRO_0000005569" description="Corrinoid adenosyltransferase MMAB">
    <location>
        <begin position="27"/>
        <end position="237"/>
    </location>
</feature>
<feature type="region of interest" description="Disordered" evidence="3">
    <location>
        <begin position="30"/>
        <end position="49"/>
    </location>
</feature>
<feature type="binding site" evidence="1">
    <location>
        <begin position="54"/>
        <end position="57"/>
    </location>
    <ligand>
        <name>ATP</name>
        <dbReference type="ChEBI" id="CHEBI:30616"/>
    </ligand>
</feature>
<feature type="binding site" evidence="1">
    <location>
        <begin position="62"/>
        <end position="63"/>
    </location>
    <ligand>
        <name>ATP</name>
        <dbReference type="ChEBI" id="CHEBI:30616"/>
    </ligand>
</feature>
<feature type="binding site" evidence="1">
    <location>
        <position position="72"/>
    </location>
    <ligand>
        <name>ATP</name>
        <dbReference type="ChEBI" id="CHEBI:30616"/>
    </ligand>
</feature>
<feature type="binding site" evidence="1">
    <location>
        <begin position="184"/>
        <end position="188"/>
    </location>
    <ligand>
        <name>ATP</name>
        <dbReference type="ChEBI" id="CHEBI:30616"/>
    </ligand>
</feature>
<feature type="binding site" evidence="1">
    <location>
        <position position="208"/>
    </location>
    <ligand>
        <name>ATP</name>
        <dbReference type="ChEBI" id="CHEBI:30616"/>
    </ligand>
</feature>
<feature type="modified residue" description="Phosphoserine" evidence="1">
    <location>
        <position position="128"/>
    </location>
</feature>
<feature type="modified residue" description="N6-succinyllysine" evidence="8">
    <location>
        <position position="205"/>
    </location>
</feature>
<feature type="modified residue" description="N6-acetyllysine; alternate" evidence="7">
    <location>
        <position position="224"/>
    </location>
</feature>
<feature type="modified residue" description="N6-succinyllysine; alternate" evidence="8">
    <location>
        <position position="224"/>
    </location>
</feature>
<feature type="splice variant" id="VSP_008847" description="In isoform 2." evidence="4">
    <original>LSDYLFTVARYAAMKEGSQEKIYKKHDV</original>
    <variation>CLSGVWRVCLTTRPLPSSCILDCAVSPVALSHSEVRLCLGNKSQRRHT</variation>
    <location>
        <begin position="210"/>
        <end position="237"/>
    </location>
</feature>
<name>MMAB_MOUSE</name>
<proteinExistence type="evidence at protein level"/>